<keyword id="KW-1003">Cell membrane</keyword>
<keyword id="KW-0472">Membrane</keyword>
<keyword id="KW-0812">Transmembrane</keyword>
<keyword id="KW-1133">Transmembrane helix</keyword>
<dbReference type="EMBL" id="BX569692">
    <property type="protein sequence ID" value="CAE07727.1"/>
    <property type="molecule type" value="Genomic_DNA"/>
</dbReference>
<dbReference type="STRING" id="84588.SYNW1212"/>
<dbReference type="KEGG" id="syw:SYNW1212"/>
<dbReference type="eggNOG" id="COG1615">
    <property type="taxonomic scope" value="Bacteria"/>
</dbReference>
<dbReference type="HOGENOM" id="CLU_007733_0_0_3"/>
<dbReference type="Proteomes" id="UP000001422">
    <property type="component" value="Chromosome"/>
</dbReference>
<dbReference type="GO" id="GO:0005576">
    <property type="term" value="C:extracellular region"/>
    <property type="evidence" value="ECO:0007669"/>
    <property type="project" value="TreeGrafter"/>
</dbReference>
<dbReference type="GO" id="GO:0005886">
    <property type="term" value="C:plasma membrane"/>
    <property type="evidence" value="ECO:0007669"/>
    <property type="project" value="UniProtKB-SubCell"/>
</dbReference>
<dbReference type="HAMAP" id="MF_01600">
    <property type="entry name" value="UPF0182"/>
    <property type="match status" value="1"/>
</dbReference>
<dbReference type="InterPro" id="IPR005372">
    <property type="entry name" value="UPF0182"/>
</dbReference>
<dbReference type="PANTHER" id="PTHR39344">
    <property type="entry name" value="UPF0182 PROTEIN SLL1060"/>
    <property type="match status" value="1"/>
</dbReference>
<dbReference type="PANTHER" id="PTHR39344:SF1">
    <property type="entry name" value="UPF0182 PROTEIN SLL1060"/>
    <property type="match status" value="1"/>
</dbReference>
<dbReference type="Pfam" id="PF03699">
    <property type="entry name" value="UPF0182"/>
    <property type="match status" value="1"/>
</dbReference>
<comment type="subcellular location">
    <subcellularLocation>
        <location evidence="1">Cell membrane</location>
        <topology evidence="1">Multi-pass membrane protein</topology>
    </subcellularLocation>
</comment>
<comment type="similarity">
    <text evidence="1">Belongs to the UPF0182 family.</text>
</comment>
<proteinExistence type="inferred from homology"/>
<sequence length="890" mass="99279">MQVEWSWFQQFQLEGVLLERWLLQLASAVVALLPIGLAIRWSRSLDPSPETASTVRLEGWRYSLTLLLAIALQLVSLAVINGLILQAIDDSMNLASGWQVSIHQSQLPVLTLISLVAVMQPRLRRLLPWFVSTAVVLIAARAWGVWALAWSIPLSGLQEPFLKADVSFALGRFAALQLLIALLSSGALFCLGNGLQTLLTRPPALSDWSCAVPGPRNRRLLMLMAALVLVLLAGQCWLSRHALLWHQHGIVAGAGWLQQAVTEPFRMLLTVELLLLALAVMLPSSLLLRRRLLGVLAVTLALGFSLTPLSRWLILRPQELSLQTPYLEEAIRSTRHAFQLDRITRGSYKPEPSLTKADIVQGASTLSNLRLWDSAPLLETNRQLQQLRVYYRFPQASVDRYPLSPQGDTPQQVILSARELDQSALPRRSKTWLNRHFVFTHGYGFTVSPVNTRGDDGLPEYFISDLGTDTRIQGNRELGIEREDVERAIPVEDAALYFGMLRSPYAVAPTRVDEFDYPEGDLNVYTHYRGSAGVPIGHWLQRVAAATYLGEPRLLTAGSIDHSSKLLIRREVRDRVQAIAPFLDLRGDPYLISIPQSGQPTSASNQHQYWVVEGFTHSSTYPYSSAVSNSDSDRYLRNSVKAVVDAYNGSVQLFISEPDDPLIRGWARVFPQLFQPLDAMPSSIRDHLRVPKELFDVQVKQLQRYHVEDPRVFYSGDDVWQVPLEVYDGEQISVRPYHITAQVQDRSNSEFLLLQPLTPLARPNLTAWLAARNDGKHYGDLVQIDFPKDTPILGPEQVQALINQDPEISKVFGLWDRGGSQVVQGNLLVVPVGQCLLYVEPVYLRASKGGLPSLTRIVVSDGRTIAMADTLPGAIDRLMQKTLPPVATGS</sequence>
<feature type="chain" id="PRO_0000291301" description="UPF0182 protein SYNW1212">
    <location>
        <begin position="1"/>
        <end position="890"/>
    </location>
</feature>
<feature type="transmembrane region" description="Helical" evidence="1">
    <location>
        <begin position="21"/>
        <end position="41"/>
    </location>
</feature>
<feature type="transmembrane region" description="Helical" evidence="1">
    <location>
        <begin position="64"/>
        <end position="84"/>
    </location>
</feature>
<feature type="transmembrane region" description="Helical" evidence="1">
    <location>
        <begin position="98"/>
        <end position="118"/>
    </location>
</feature>
<feature type="transmembrane region" description="Helical" evidence="1">
    <location>
        <begin position="134"/>
        <end position="154"/>
    </location>
</feature>
<feature type="transmembrane region" description="Helical" evidence="1">
    <location>
        <begin position="173"/>
        <end position="193"/>
    </location>
</feature>
<feature type="transmembrane region" description="Helical" evidence="1">
    <location>
        <begin position="219"/>
        <end position="239"/>
    </location>
</feature>
<feature type="transmembrane region" description="Helical" evidence="1">
    <location>
        <begin position="268"/>
        <end position="288"/>
    </location>
</feature>
<feature type="transmembrane region" description="Helical" evidence="1">
    <location>
        <begin position="295"/>
        <end position="315"/>
    </location>
</feature>
<evidence type="ECO:0000255" key="1">
    <source>
        <dbReference type="HAMAP-Rule" id="MF_01600"/>
    </source>
</evidence>
<protein>
    <recommendedName>
        <fullName evidence="1">UPF0182 protein SYNW1212</fullName>
    </recommendedName>
</protein>
<accession>Q7U6X4</accession>
<organism>
    <name type="scientific">Parasynechococcus marenigrum (strain WH8102)</name>
    <dbReference type="NCBI Taxonomy" id="84588"/>
    <lineage>
        <taxon>Bacteria</taxon>
        <taxon>Bacillati</taxon>
        <taxon>Cyanobacteriota</taxon>
        <taxon>Cyanophyceae</taxon>
        <taxon>Synechococcales</taxon>
        <taxon>Prochlorococcaceae</taxon>
        <taxon>Parasynechococcus</taxon>
        <taxon>Parasynechococcus marenigrum</taxon>
    </lineage>
</organism>
<reference key="1">
    <citation type="journal article" date="2003" name="Nature">
        <title>The genome of a motile marine Synechococcus.</title>
        <authorList>
            <person name="Palenik B."/>
            <person name="Brahamsha B."/>
            <person name="Larimer F.W."/>
            <person name="Land M.L."/>
            <person name="Hauser L."/>
            <person name="Chain P."/>
            <person name="Lamerdin J.E."/>
            <person name="Regala W."/>
            <person name="Allen E.E."/>
            <person name="McCarren J."/>
            <person name="Paulsen I.T."/>
            <person name="Dufresne A."/>
            <person name="Partensky F."/>
            <person name="Webb E.A."/>
            <person name="Waterbury J."/>
        </authorList>
    </citation>
    <scope>NUCLEOTIDE SEQUENCE [LARGE SCALE GENOMIC DNA]</scope>
    <source>
        <strain>WH8102</strain>
    </source>
</reference>
<name>Y1212_PARMW</name>
<gene>
    <name type="ordered locus">SYNW1212</name>
</gene>